<comment type="function">
    <text evidence="1">Catalyzes the decarboxylation of orotidine 5'-monophosphate (OMP) to uridine 5'-monophosphate (UMP).</text>
</comment>
<comment type="catalytic activity">
    <reaction evidence="1">
        <text>orotidine 5'-phosphate + H(+) = UMP + CO2</text>
        <dbReference type="Rhea" id="RHEA:11596"/>
        <dbReference type="ChEBI" id="CHEBI:15378"/>
        <dbReference type="ChEBI" id="CHEBI:16526"/>
        <dbReference type="ChEBI" id="CHEBI:57538"/>
        <dbReference type="ChEBI" id="CHEBI:57865"/>
        <dbReference type="EC" id="4.1.1.23"/>
    </reaction>
</comment>
<comment type="pathway">
    <text evidence="1">Pyrimidine metabolism; UMP biosynthesis via de novo pathway; UMP from orotate: step 2/2.</text>
</comment>
<comment type="subunit">
    <text evidence="1">Homodimer.</text>
</comment>
<comment type="similarity">
    <text evidence="1">Belongs to the OMP decarboxylase family. Type 1 subfamily.</text>
</comment>
<gene>
    <name evidence="1" type="primary">pyrF</name>
    <name type="ordered locus">Sala_1066</name>
</gene>
<sequence>MTSPIYLAIDTPHLDAALTLAQKVRHHVGGLKLGLEFFCANGHHGVHEMAKLGLPIFLDLKLHDIPNTVAKAIQALRPLEPAILTVHAAGGRAMLEEAKAVAGKDTRVIAVTVLTSLDAPDLEDIGLTGTPHDQVVRLAALAREAGLDGIVCSGQEVKSARKAWPGGFFVVPGVRPANGRIGDQKRIVTPAQAMSDGASILVVGRPITQSSDPDLAAREIEATL</sequence>
<organism>
    <name type="scientific">Sphingopyxis alaskensis (strain DSM 13593 / LMG 18877 / RB2256)</name>
    <name type="common">Sphingomonas alaskensis</name>
    <dbReference type="NCBI Taxonomy" id="317655"/>
    <lineage>
        <taxon>Bacteria</taxon>
        <taxon>Pseudomonadati</taxon>
        <taxon>Pseudomonadota</taxon>
        <taxon>Alphaproteobacteria</taxon>
        <taxon>Sphingomonadales</taxon>
        <taxon>Sphingomonadaceae</taxon>
        <taxon>Sphingopyxis</taxon>
    </lineage>
</organism>
<proteinExistence type="inferred from homology"/>
<evidence type="ECO:0000255" key="1">
    <source>
        <dbReference type="HAMAP-Rule" id="MF_01200"/>
    </source>
</evidence>
<reference key="1">
    <citation type="journal article" date="2009" name="Proc. Natl. Acad. Sci. U.S.A.">
        <title>The genomic basis of trophic strategy in marine bacteria.</title>
        <authorList>
            <person name="Lauro F.M."/>
            <person name="McDougald D."/>
            <person name="Thomas T."/>
            <person name="Williams T.J."/>
            <person name="Egan S."/>
            <person name="Rice S."/>
            <person name="DeMaere M.Z."/>
            <person name="Ting L."/>
            <person name="Ertan H."/>
            <person name="Johnson J."/>
            <person name="Ferriera S."/>
            <person name="Lapidus A."/>
            <person name="Anderson I."/>
            <person name="Kyrpides N."/>
            <person name="Munk A.C."/>
            <person name="Detter C."/>
            <person name="Han C.S."/>
            <person name="Brown M.V."/>
            <person name="Robb F.T."/>
            <person name="Kjelleberg S."/>
            <person name="Cavicchioli R."/>
        </authorList>
    </citation>
    <scope>NUCLEOTIDE SEQUENCE [LARGE SCALE GENOMIC DNA]</scope>
    <source>
        <strain>DSM 13593 / LMG 18877 / RB2256</strain>
    </source>
</reference>
<dbReference type="EC" id="4.1.1.23" evidence="1"/>
<dbReference type="EMBL" id="CP000356">
    <property type="protein sequence ID" value="ABF52783.1"/>
    <property type="molecule type" value="Genomic_DNA"/>
</dbReference>
<dbReference type="RefSeq" id="WP_011541369.1">
    <property type="nucleotide sequence ID" value="NC_008048.1"/>
</dbReference>
<dbReference type="SMR" id="Q1GU89"/>
<dbReference type="STRING" id="317655.Sala_1066"/>
<dbReference type="KEGG" id="sal:Sala_1066"/>
<dbReference type="eggNOG" id="COG0284">
    <property type="taxonomic scope" value="Bacteria"/>
</dbReference>
<dbReference type="HOGENOM" id="CLU_067069_1_0_5"/>
<dbReference type="OrthoDB" id="9806203at2"/>
<dbReference type="UniPathway" id="UPA00070">
    <property type="reaction ID" value="UER00120"/>
</dbReference>
<dbReference type="Proteomes" id="UP000006578">
    <property type="component" value="Chromosome"/>
</dbReference>
<dbReference type="GO" id="GO:0005829">
    <property type="term" value="C:cytosol"/>
    <property type="evidence" value="ECO:0007669"/>
    <property type="project" value="TreeGrafter"/>
</dbReference>
<dbReference type="GO" id="GO:0004590">
    <property type="term" value="F:orotidine-5'-phosphate decarboxylase activity"/>
    <property type="evidence" value="ECO:0007669"/>
    <property type="project" value="UniProtKB-UniRule"/>
</dbReference>
<dbReference type="GO" id="GO:0006207">
    <property type="term" value="P:'de novo' pyrimidine nucleobase biosynthetic process"/>
    <property type="evidence" value="ECO:0007669"/>
    <property type="project" value="InterPro"/>
</dbReference>
<dbReference type="GO" id="GO:0044205">
    <property type="term" value="P:'de novo' UMP biosynthetic process"/>
    <property type="evidence" value="ECO:0007669"/>
    <property type="project" value="UniProtKB-UniRule"/>
</dbReference>
<dbReference type="CDD" id="cd04725">
    <property type="entry name" value="OMP_decarboxylase_like"/>
    <property type="match status" value="1"/>
</dbReference>
<dbReference type="Gene3D" id="3.20.20.70">
    <property type="entry name" value="Aldolase class I"/>
    <property type="match status" value="1"/>
</dbReference>
<dbReference type="HAMAP" id="MF_01200_B">
    <property type="entry name" value="OMPdecase_type1_B"/>
    <property type="match status" value="1"/>
</dbReference>
<dbReference type="InterPro" id="IPR013785">
    <property type="entry name" value="Aldolase_TIM"/>
</dbReference>
<dbReference type="InterPro" id="IPR014732">
    <property type="entry name" value="OMPdecase"/>
</dbReference>
<dbReference type="InterPro" id="IPR018089">
    <property type="entry name" value="OMPdecase_AS"/>
</dbReference>
<dbReference type="InterPro" id="IPR047596">
    <property type="entry name" value="OMPdecase_bac"/>
</dbReference>
<dbReference type="InterPro" id="IPR001754">
    <property type="entry name" value="OMPdeCOase_dom"/>
</dbReference>
<dbReference type="InterPro" id="IPR011060">
    <property type="entry name" value="RibuloseP-bd_barrel"/>
</dbReference>
<dbReference type="NCBIfam" id="NF001273">
    <property type="entry name" value="PRK00230.1"/>
    <property type="match status" value="1"/>
</dbReference>
<dbReference type="NCBIfam" id="TIGR01740">
    <property type="entry name" value="pyrF"/>
    <property type="match status" value="1"/>
</dbReference>
<dbReference type="PANTHER" id="PTHR32119">
    <property type="entry name" value="OROTIDINE 5'-PHOSPHATE DECARBOXYLASE"/>
    <property type="match status" value="1"/>
</dbReference>
<dbReference type="PANTHER" id="PTHR32119:SF2">
    <property type="entry name" value="OROTIDINE 5'-PHOSPHATE DECARBOXYLASE"/>
    <property type="match status" value="1"/>
</dbReference>
<dbReference type="Pfam" id="PF00215">
    <property type="entry name" value="OMPdecase"/>
    <property type="match status" value="1"/>
</dbReference>
<dbReference type="SMART" id="SM00934">
    <property type="entry name" value="OMPdecase"/>
    <property type="match status" value="1"/>
</dbReference>
<dbReference type="SUPFAM" id="SSF51366">
    <property type="entry name" value="Ribulose-phoshate binding barrel"/>
    <property type="match status" value="1"/>
</dbReference>
<dbReference type="PROSITE" id="PS00156">
    <property type="entry name" value="OMPDECASE"/>
    <property type="match status" value="1"/>
</dbReference>
<name>PYRF_SPHAL</name>
<protein>
    <recommendedName>
        <fullName evidence="1">Orotidine 5'-phosphate decarboxylase</fullName>
        <ecNumber evidence="1">4.1.1.23</ecNumber>
    </recommendedName>
    <alternativeName>
        <fullName evidence="1">OMP decarboxylase</fullName>
        <shortName evidence="1">OMPDCase</shortName>
        <shortName evidence="1">OMPdecase</shortName>
    </alternativeName>
</protein>
<accession>Q1GU89</accession>
<keyword id="KW-0210">Decarboxylase</keyword>
<keyword id="KW-0456">Lyase</keyword>
<keyword id="KW-0665">Pyrimidine biosynthesis</keyword>
<keyword id="KW-1185">Reference proteome</keyword>
<feature type="chain" id="PRO_1000065942" description="Orotidine 5'-phosphate decarboxylase">
    <location>
        <begin position="1"/>
        <end position="224"/>
    </location>
</feature>
<feature type="active site" description="Proton donor" evidence="1">
    <location>
        <position position="61"/>
    </location>
</feature>
<feature type="binding site" evidence="1">
    <location>
        <position position="10"/>
    </location>
    <ligand>
        <name>substrate</name>
    </ligand>
</feature>
<feature type="binding site" evidence="1">
    <location>
        <position position="32"/>
    </location>
    <ligand>
        <name>substrate</name>
    </ligand>
</feature>
<feature type="binding site" evidence="1">
    <location>
        <begin position="59"/>
        <end position="68"/>
    </location>
    <ligand>
        <name>substrate</name>
    </ligand>
</feature>
<feature type="binding site" evidence="1">
    <location>
        <position position="115"/>
    </location>
    <ligand>
        <name>substrate</name>
    </ligand>
</feature>
<feature type="binding site" evidence="1">
    <location>
        <position position="175"/>
    </location>
    <ligand>
        <name>substrate</name>
    </ligand>
</feature>
<feature type="binding site" evidence="1">
    <location>
        <position position="184"/>
    </location>
    <ligand>
        <name>substrate</name>
    </ligand>
</feature>
<feature type="binding site" evidence="1">
    <location>
        <position position="204"/>
    </location>
    <ligand>
        <name>substrate</name>
    </ligand>
</feature>
<feature type="binding site" evidence="1">
    <location>
        <position position="205"/>
    </location>
    <ligand>
        <name>substrate</name>
    </ligand>
</feature>